<keyword id="KW-0004">4Fe-4S</keyword>
<keyword id="KW-0025">Alternative splicing</keyword>
<keyword id="KW-0342">GTP-binding</keyword>
<keyword id="KW-0408">Iron</keyword>
<keyword id="KW-0411">Iron-sulfur</keyword>
<keyword id="KW-0456">Lyase</keyword>
<keyword id="KW-0479">Metal-binding</keyword>
<keyword id="KW-0501">Molybdenum cofactor biosynthesis</keyword>
<keyword id="KW-0547">Nucleotide-binding</keyword>
<keyword id="KW-1185">Reference proteome</keyword>
<keyword id="KW-0949">S-adenosyl-L-methionine</keyword>
<comment type="function">
    <text evidence="3">Isoform Mocs1a and isoform Mocs1b probably form a complex that catalyzes the conversion of 5'-GTP to cyclic pyranopterin monophosphate (cPMP). Mocs1a catalyzes the cyclization of GTP to (8S)-3',8-cyclo-7,8-dihydroguanosine 5'-triphosphate and Mocs1b catalyzes the subsequent conversion of (8S)-3',8-cyclo-7,8-dihydroguanosine 5'-triphosphate to cPMP.</text>
</comment>
<comment type="catalytic activity">
    <reaction evidence="2">
        <text>GTP + AH2 + S-adenosyl-L-methionine = (8S)-3',8-cyclo-7,8-dihydroguanosine 5'-triphosphate + 5'-deoxyadenosine + L-methionine + A + H(+)</text>
        <dbReference type="Rhea" id="RHEA:49576"/>
        <dbReference type="ChEBI" id="CHEBI:13193"/>
        <dbReference type="ChEBI" id="CHEBI:15378"/>
        <dbReference type="ChEBI" id="CHEBI:17319"/>
        <dbReference type="ChEBI" id="CHEBI:17499"/>
        <dbReference type="ChEBI" id="CHEBI:37565"/>
        <dbReference type="ChEBI" id="CHEBI:57844"/>
        <dbReference type="ChEBI" id="CHEBI:59789"/>
        <dbReference type="ChEBI" id="CHEBI:131766"/>
        <dbReference type="EC" id="4.1.99.22"/>
    </reaction>
</comment>
<comment type="catalytic activity">
    <reaction evidence="3">
        <text>(8S)-3',8-cyclo-7,8-dihydroguanosine 5'-triphosphate = cyclic pyranopterin phosphate + diphosphate</text>
        <dbReference type="Rhea" id="RHEA:49580"/>
        <dbReference type="ChEBI" id="CHEBI:33019"/>
        <dbReference type="ChEBI" id="CHEBI:59648"/>
        <dbReference type="ChEBI" id="CHEBI:131766"/>
        <dbReference type="EC" id="4.6.1.17"/>
    </reaction>
</comment>
<comment type="cofactor">
    <cofactor evidence="3">
        <name>[4Fe-4S] cluster</name>
        <dbReference type="ChEBI" id="CHEBI:49883"/>
    </cofactor>
    <text evidence="3">Binds 2 [4Fe-4S] clusters. Binds 1 [4Fe-4S] cluster coordinated with 3 cysteines and an exchangeable S-adenosyl-L-methionine and 1 [4Fe-4S] cluster coordinated with 3 cysteines and the GTP-derived substrate.</text>
</comment>
<comment type="pathway">
    <text>Cofactor biosynthesis; molybdopterin biosynthesis.</text>
</comment>
<comment type="subunit">
    <text evidence="3">Isoform Mocs1a and isoform Mocs1b probably form a heterooligomer.</text>
</comment>
<comment type="alternative products">
    <event type="alternative splicing"/>
    <isoform>
        <id>Q8IQF1-1</id>
        <name>Mocs1b</name>
        <name>C</name>
        <sequence type="displayed"/>
    </isoform>
    <isoform>
        <id>Q8IQF1-2</id>
        <name>Mocs1a</name>
        <name>A</name>
        <sequence type="described" ref="VSP_036853 VSP_036854"/>
    </isoform>
</comment>
<comment type="miscellaneous">
    <text>Isoform Mocs1a seems to be translated from a bicistronic transcript while isoform Mocs1b seems to be translated from a monocistronic mRNA that is derived by alternative splicing.</text>
</comment>
<comment type="similarity">
    <text evidence="8">In the C-terminal section; belongs to the MoaC family.</text>
</comment>
<comment type="similarity">
    <text evidence="8">In the N-terminal section; belongs to the radical SAM superfamily. MoaA family.</text>
</comment>
<comment type="caution">
    <text evidence="3">The C-terminus of Mocs1a was previously believed to be thiocarboxylated, but it is now known not to be the case.</text>
</comment>
<comment type="sequence caution" evidence="8">
    <conflict type="erroneous translation">
        <sequence resource="EMBL-CDS" id="AAF67856"/>
    </conflict>
    <text>Wrong choice of frame.</text>
</comment>
<accession>Q8IQF1</accession>
<accession>Q9NIG3</accession>
<accession>Q9NIG4</accession>
<accession>Q9VTE4</accession>
<gene>
    <name type="primary">Mocs1</name>
    <name type="synonym">lxd</name>
    <name type="ORF">CG33048</name>
</gene>
<sequence>MRLLARHAIRLLGQENSAGEVASLSRGAIRLKATTGYLNLATASVQPLEPEKQVLRKNSPLTDSFGRHHTYLRISLTERCNLRCDYCMPAEGVPLQPKNKLLTTEEILRLARIFVEQGVRKIRLTGGEPTVRRDIVEIVAQMKALPELEQIGITTNGLVLTRLLLPLQRAGLDNLNISLDTLKRDRFEKITRRKGWERVIAGIDLAVQLGYRPKVNCVLMRDFNEDEICDFVEFTRNRPVDVRFIEYMPFSGNKWHTERLISYKDTLQIIRQRWPDFKALPNGPNDTSKAYAVPGFKGQVGFITSMTEHFCGTCNRLRLTADGNIKVCLFGNKEFSLRDAMRDESVSEEQLVDLIGAAVQRKKKQHADAAPRLHHHLHPYSYHHAYHTSRLQLQARNYSQLTHVDGQGKAQMVDVGAKPSTTRLARAEATVQVGEKLTQLIADNQVAKGDVLTVAQIAGIMGAKRTAELIPLCHNISLSSVKVQATLLKTEQSVRLEATVRCSGQTGVEMEALTAVSVAALTVYDMCKAVSHDICITNVRLLSKSGGKRDFQREEPQNGIVTEVE</sequence>
<reference key="1">
    <citation type="journal article" date="2000" name="RNA">
        <title>Diverse splicing mechanisms fuse the evolutionarily conserved bicistronic MOCS1A and MOCS1B open reading frames.</title>
        <authorList>
            <person name="Gray T.A."/>
            <person name="Nicholls R.D."/>
        </authorList>
    </citation>
    <scope>NUCLEOTIDE SEQUENCE [MRNA] (ISOFORM MOCS1A)</scope>
    <scope>ALTERNATIVE SPLICING</scope>
</reference>
<reference key="2">
    <citation type="journal article" date="2000" name="Science">
        <title>The genome sequence of Drosophila melanogaster.</title>
        <authorList>
            <person name="Adams M.D."/>
            <person name="Celniker S.E."/>
            <person name="Holt R.A."/>
            <person name="Evans C.A."/>
            <person name="Gocayne J.D."/>
            <person name="Amanatides P.G."/>
            <person name="Scherer S.E."/>
            <person name="Li P.W."/>
            <person name="Hoskins R.A."/>
            <person name="Galle R.F."/>
            <person name="George R.A."/>
            <person name="Lewis S.E."/>
            <person name="Richards S."/>
            <person name="Ashburner M."/>
            <person name="Henderson S.N."/>
            <person name="Sutton G.G."/>
            <person name="Wortman J.R."/>
            <person name="Yandell M.D."/>
            <person name="Zhang Q."/>
            <person name="Chen L.X."/>
            <person name="Brandon R.C."/>
            <person name="Rogers Y.-H.C."/>
            <person name="Blazej R.G."/>
            <person name="Champe M."/>
            <person name="Pfeiffer B.D."/>
            <person name="Wan K.H."/>
            <person name="Doyle C."/>
            <person name="Baxter E.G."/>
            <person name="Helt G."/>
            <person name="Nelson C.R."/>
            <person name="Miklos G.L.G."/>
            <person name="Abril J.F."/>
            <person name="Agbayani A."/>
            <person name="An H.-J."/>
            <person name="Andrews-Pfannkoch C."/>
            <person name="Baldwin D."/>
            <person name="Ballew R.M."/>
            <person name="Basu A."/>
            <person name="Baxendale J."/>
            <person name="Bayraktaroglu L."/>
            <person name="Beasley E.M."/>
            <person name="Beeson K.Y."/>
            <person name="Benos P.V."/>
            <person name="Berman B.P."/>
            <person name="Bhandari D."/>
            <person name="Bolshakov S."/>
            <person name="Borkova D."/>
            <person name="Botchan M.R."/>
            <person name="Bouck J."/>
            <person name="Brokstein P."/>
            <person name="Brottier P."/>
            <person name="Burtis K.C."/>
            <person name="Busam D.A."/>
            <person name="Butler H."/>
            <person name="Cadieu E."/>
            <person name="Center A."/>
            <person name="Chandra I."/>
            <person name="Cherry J.M."/>
            <person name="Cawley S."/>
            <person name="Dahlke C."/>
            <person name="Davenport L.B."/>
            <person name="Davies P."/>
            <person name="de Pablos B."/>
            <person name="Delcher A."/>
            <person name="Deng Z."/>
            <person name="Mays A.D."/>
            <person name="Dew I."/>
            <person name="Dietz S.M."/>
            <person name="Dodson K."/>
            <person name="Doup L.E."/>
            <person name="Downes M."/>
            <person name="Dugan-Rocha S."/>
            <person name="Dunkov B.C."/>
            <person name="Dunn P."/>
            <person name="Durbin K.J."/>
            <person name="Evangelista C.C."/>
            <person name="Ferraz C."/>
            <person name="Ferriera S."/>
            <person name="Fleischmann W."/>
            <person name="Fosler C."/>
            <person name="Gabrielian A.E."/>
            <person name="Garg N.S."/>
            <person name="Gelbart W.M."/>
            <person name="Glasser K."/>
            <person name="Glodek A."/>
            <person name="Gong F."/>
            <person name="Gorrell J.H."/>
            <person name="Gu Z."/>
            <person name="Guan P."/>
            <person name="Harris M."/>
            <person name="Harris N.L."/>
            <person name="Harvey D.A."/>
            <person name="Heiman T.J."/>
            <person name="Hernandez J.R."/>
            <person name="Houck J."/>
            <person name="Hostin D."/>
            <person name="Houston K.A."/>
            <person name="Howland T.J."/>
            <person name="Wei M.-H."/>
            <person name="Ibegwam C."/>
            <person name="Jalali M."/>
            <person name="Kalush F."/>
            <person name="Karpen G.H."/>
            <person name="Ke Z."/>
            <person name="Kennison J.A."/>
            <person name="Ketchum K.A."/>
            <person name="Kimmel B.E."/>
            <person name="Kodira C.D."/>
            <person name="Kraft C.L."/>
            <person name="Kravitz S."/>
            <person name="Kulp D."/>
            <person name="Lai Z."/>
            <person name="Lasko P."/>
            <person name="Lei Y."/>
            <person name="Levitsky A.A."/>
            <person name="Li J.H."/>
            <person name="Li Z."/>
            <person name="Liang Y."/>
            <person name="Lin X."/>
            <person name="Liu X."/>
            <person name="Mattei B."/>
            <person name="McIntosh T.C."/>
            <person name="McLeod M.P."/>
            <person name="McPherson D."/>
            <person name="Merkulov G."/>
            <person name="Milshina N.V."/>
            <person name="Mobarry C."/>
            <person name="Morris J."/>
            <person name="Moshrefi A."/>
            <person name="Mount S.M."/>
            <person name="Moy M."/>
            <person name="Murphy B."/>
            <person name="Murphy L."/>
            <person name="Muzny D.M."/>
            <person name="Nelson D.L."/>
            <person name="Nelson D.R."/>
            <person name="Nelson K.A."/>
            <person name="Nixon K."/>
            <person name="Nusskern D.R."/>
            <person name="Pacleb J.M."/>
            <person name="Palazzolo M."/>
            <person name="Pittman G.S."/>
            <person name="Pan S."/>
            <person name="Pollard J."/>
            <person name="Puri V."/>
            <person name="Reese M.G."/>
            <person name="Reinert K."/>
            <person name="Remington K."/>
            <person name="Saunders R.D.C."/>
            <person name="Scheeler F."/>
            <person name="Shen H."/>
            <person name="Shue B.C."/>
            <person name="Siden-Kiamos I."/>
            <person name="Simpson M."/>
            <person name="Skupski M.P."/>
            <person name="Smith T.J."/>
            <person name="Spier E."/>
            <person name="Spradling A.C."/>
            <person name="Stapleton M."/>
            <person name="Strong R."/>
            <person name="Sun E."/>
            <person name="Svirskas R."/>
            <person name="Tector C."/>
            <person name="Turner R."/>
            <person name="Venter E."/>
            <person name="Wang A.H."/>
            <person name="Wang X."/>
            <person name="Wang Z.-Y."/>
            <person name="Wassarman D.A."/>
            <person name="Weinstock G.M."/>
            <person name="Weissenbach J."/>
            <person name="Williams S.M."/>
            <person name="Woodage T."/>
            <person name="Worley K.C."/>
            <person name="Wu D."/>
            <person name="Yang S."/>
            <person name="Yao Q.A."/>
            <person name="Ye J."/>
            <person name="Yeh R.-F."/>
            <person name="Zaveri J.S."/>
            <person name="Zhan M."/>
            <person name="Zhang G."/>
            <person name="Zhao Q."/>
            <person name="Zheng L."/>
            <person name="Zheng X.H."/>
            <person name="Zhong F.N."/>
            <person name="Zhong W."/>
            <person name="Zhou X."/>
            <person name="Zhu S.C."/>
            <person name="Zhu X."/>
            <person name="Smith H.O."/>
            <person name="Gibbs R.A."/>
            <person name="Myers E.W."/>
            <person name="Rubin G.M."/>
            <person name="Venter J.C."/>
        </authorList>
    </citation>
    <scope>NUCLEOTIDE SEQUENCE [LARGE SCALE GENOMIC DNA]</scope>
    <source>
        <strain>Berkeley</strain>
    </source>
</reference>
<reference key="3">
    <citation type="journal article" date="2002" name="Genome Biol.">
        <title>Annotation of the Drosophila melanogaster euchromatic genome: a systematic review.</title>
        <authorList>
            <person name="Misra S."/>
            <person name="Crosby M.A."/>
            <person name="Mungall C.J."/>
            <person name="Matthews B.B."/>
            <person name="Campbell K.S."/>
            <person name="Hradecky P."/>
            <person name="Huang Y."/>
            <person name="Kaminker J.S."/>
            <person name="Millburn G.H."/>
            <person name="Prochnik S.E."/>
            <person name="Smith C.D."/>
            <person name="Tupy J.L."/>
            <person name="Whitfield E.J."/>
            <person name="Bayraktaroglu L."/>
            <person name="Berman B.P."/>
            <person name="Bettencourt B.R."/>
            <person name="Celniker S.E."/>
            <person name="de Grey A.D.N.J."/>
            <person name="Drysdale R.A."/>
            <person name="Harris N.L."/>
            <person name="Richter J."/>
            <person name="Russo S."/>
            <person name="Schroeder A.J."/>
            <person name="Shu S.Q."/>
            <person name="Stapleton M."/>
            <person name="Yamada C."/>
            <person name="Ashburner M."/>
            <person name="Gelbart W.M."/>
            <person name="Rubin G.M."/>
            <person name="Lewis S.E."/>
        </authorList>
    </citation>
    <scope>GENOME REANNOTATION</scope>
    <source>
        <strain>Berkeley</strain>
    </source>
</reference>
<reference key="4">
    <citation type="submission" date="2006-03" db="EMBL/GenBank/DDBJ databases">
        <authorList>
            <person name="Stapleton M."/>
            <person name="Carlson J.W."/>
            <person name="Chavez C."/>
            <person name="Frise E."/>
            <person name="George R.A."/>
            <person name="Pacleb J.M."/>
            <person name="Park S."/>
            <person name="Wan K.H."/>
            <person name="Yu C."/>
            <person name="Celniker S.E."/>
        </authorList>
    </citation>
    <scope>NUCLEOTIDE SEQUENCE [LARGE SCALE MRNA] (ISOFORM MOCS1A)</scope>
    <source>
        <strain>Berkeley</strain>
    </source>
</reference>
<protein>
    <recommendedName>
        <fullName>Molybdenum cofactor biosynthesis protein 1</fullName>
    </recommendedName>
    <domain>
        <recommendedName>
            <fullName>GTP 3',8-cyclase</fullName>
            <ecNumber evidence="2">4.1.99.22</ecNumber>
        </recommendedName>
        <alternativeName>
            <fullName>Molybdenum cofactor biosynthesis protein A</fullName>
        </alternativeName>
    </domain>
    <domain>
        <recommendedName>
            <fullName>Cyclic pyranopterin monophosphate synthase</fullName>
            <ecNumber evidence="3">4.6.1.17</ecNumber>
        </recommendedName>
        <alternativeName>
            <fullName>Molybdenum cofactor biosynthesis protein C</fullName>
        </alternativeName>
    </domain>
</protein>
<evidence type="ECO:0000250" key="1"/>
<evidence type="ECO:0000250" key="2">
    <source>
        <dbReference type="UniProtKB" id="P69848"/>
    </source>
</evidence>
<evidence type="ECO:0000250" key="3">
    <source>
        <dbReference type="UniProtKB" id="Q9NZB8"/>
    </source>
</evidence>
<evidence type="ECO:0000255" key="4"/>
<evidence type="ECO:0000255" key="5">
    <source>
        <dbReference type="PROSITE-ProRule" id="PRU01266"/>
    </source>
</evidence>
<evidence type="ECO:0000303" key="6">
    <source>
    </source>
</evidence>
<evidence type="ECO:0000303" key="7">
    <source ref="4"/>
</evidence>
<evidence type="ECO:0000305" key="8"/>
<dbReference type="EC" id="4.1.99.22" evidence="2"/>
<dbReference type="EC" id="4.6.1.17" evidence="3"/>
<dbReference type="EMBL" id="AF214021">
    <property type="protein sequence ID" value="AAF67855.1"/>
    <property type="molecule type" value="mRNA"/>
</dbReference>
<dbReference type="EMBL" id="AF214021">
    <property type="protein sequence ID" value="AAF67856.1"/>
    <property type="status" value="ALT_SEQ"/>
    <property type="molecule type" value="mRNA"/>
</dbReference>
<dbReference type="EMBL" id="AE014296">
    <property type="protein sequence ID" value="AAN11896.1"/>
    <property type="molecule type" value="Genomic_DNA"/>
</dbReference>
<dbReference type="EMBL" id="AE014296">
    <property type="protein sequence ID" value="AAF50108.2"/>
    <property type="molecule type" value="Genomic_DNA"/>
</dbReference>
<dbReference type="EMBL" id="BT024947">
    <property type="protein sequence ID" value="ABE01177.1"/>
    <property type="molecule type" value="mRNA"/>
</dbReference>
<dbReference type="RefSeq" id="NP_788494.1">
    <molecule id="Q8IQF1-1"/>
    <property type="nucleotide sequence ID" value="NM_176316.2"/>
</dbReference>
<dbReference type="RefSeq" id="NP_788495.1">
    <molecule id="Q8IQF1-2"/>
    <property type="nucleotide sequence ID" value="NM_176317.2"/>
</dbReference>
<dbReference type="SMR" id="Q8IQF1"/>
<dbReference type="BioGRID" id="64613">
    <property type="interactions" value="4"/>
</dbReference>
<dbReference type="FunCoup" id="Q8IQF1">
    <property type="interactions" value="372"/>
</dbReference>
<dbReference type="IntAct" id="Q8IQF1">
    <property type="interactions" value="1"/>
</dbReference>
<dbReference type="STRING" id="7227.FBpp0075935"/>
<dbReference type="PaxDb" id="7227-FBpp0075935"/>
<dbReference type="DNASU" id="39238"/>
<dbReference type="EnsemblMetazoa" id="FBtr0076204">
    <molecule id="Q8IQF1-2"/>
    <property type="protein sequence ID" value="FBpp0075934"/>
    <property type="gene ID" value="FBgn0263241"/>
</dbReference>
<dbReference type="EnsemblMetazoa" id="FBtr0076205">
    <molecule id="Q8IQF1-1"/>
    <property type="protein sequence ID" value="FBpp0075935"/>
    <property type="gene ID" value="FBgn0263241"/>
</dbReference>
<dbReference type="GeneID" id="39238"/>
<dbReference type="KEGG" id="dme:Dmel_CG33048"/>
<dbReference type="UCSC" id="CG33048-RA">
    <property type="organism name" value="d. melanogaster"/>
</dbReference>
<dbReference type="UCSC" id="CG33048-RB">
    <property type="organism name" value="d. melanogaster"/>
</dbReference>
<dbReference type="UCSC" id="CG33048-RC">
    <molecule id="Q8IQF1-1"/>
    <property type="organism name" value="d. melanogaster"/>
</dbReference>
<dbReference type="AGR" id="FB:FBgn0263241"/>
<dbReference type="CTD" id="4337"/>
<dbReference type="FlyBase" id="FBgn0263241">
    <property type="gene designation" value="Mocs1"/>
</dbReference>
<dbReference type="VEuPathDB" id="VectorBase:FBgn0263241"/>
<dbReference type="eggNOG" id="KOG2876">
    <property type="taxonomic scope" value="Eukaryota"/>
</dbReference>
<dbReference type="GeneTree" id="ENSGT00390000016567"/>
<dbReference type="HOGENOM" id="CLU_009273_7_2_1"/>
<dbReference type="InParanoid" id="Q8IQF1"/>
<dbReference type="OMA" id="QTVHMTS"/>
<dbReference type="OrthoDB" id="429626at2759"/>
<dbReference type="PhylomeDB" id="Q8IQF1"/>
<dbReference type="Reactome" id="R-DME-947581">
    <property type="pathway name" value="Molybdenum cofactor biosynthesis"/>
</dbReference>
<dbReference type="UniPathway" id="UPA00344"/>
<dbReference type="BioGRID-ORCS" id="39238">
    <property type="hits" value="0 hits in 1 CRISPR screen"/>
</dbReference>
<dbReference type="GenomeRNAi" id="39238"/>
<dbReference type="PRO" id="PR:Q8IQF1"/>
<dbReference type="Proteomes" id="UP000000803">
    <property type="component" value="Chromosome 3L"/>
</dbReference>
<dbReference type="Bgee" id="FBgn0263241">
    <property type="expression patterns" value="Expressed in adult midgut enterocyte in digestive tract and 82 other cell types or tissues"/>
</dbReference>
<dbReference type="ExpressionAtlas" id="Q8IQF1">
    <property type="expression patterns" value="baseline and differential"/>
</dbReference>
<dbReference type="GO" id="GO:0005759">
    <property type="term" value="C:mitochondrial matrix"/>
    <property type="evidence" value="ECO:0000304"/>
    <property type="project" value="FlyBase"/>
</dbReference>
<dbReference type="GO" id="GO:0051539">
    <property type="term" value="F:4 iron, 4 sulfur cluster binding"/>
    <property type="evidence" value="ECO:0007669"/>
    <property type="project" value="UniProtKB-KW"/>
</dbReference>
<dbReference type="GO" id="GO:0061799">
    <property type="term" value="F:cyclic pyranopterin monophosphate synthase activity"/>
    <property type="evidence" value="ECO:0000250"/>
    <property type="project" value="FlyBase"/>
</dbReference>
<dbReference type="GO" id="GO:0061798">
    <property type="term" value="F:GTP 3',8'-cyclase activity"/>
    <property type="evidence" value="ECO:0000250"/>
    <property type="project" value="FlyBase"/>
</dbReference>
<dbReference type="GO" id="GO:0005525">
    <property type="term" value="F:GTP binding"/>
    <property type="evidence" value="ECO:0007669"/>
    <property type="project" value="UniProtKB-KW"/>
</dbReference>
<dbReference type="GO" id="GO:0046872">
    <property type="term" value="F:metal ion binding"/>
    <property type="evidence" value="ECO:0007669"/>
    <property type="project" value="UniProtKB-KW"/>
</dbReference>
<dbReference type="GO" id="GO:0002121">
    <property type="term" value="P:inter-male aggressive behavior"/>
    <property type="evidence" value="ECO:0000315"/>
    <property type="project" value="FlyBase"/>
</dbReference>
<dbReference type="GO" id="GO:0006777">
    <property type="term" value="P:Mo-molybdopterin cofactor biosynthetic process"/>
    <property type="evidence" value="ECO:0000250"/>
    <property type="project" value="UniProtKB"/>
</dbReference>
<dbReference type="GO" id="GO:0032324">
    <property type="term" value="P:molybdopterin cofactor biosynthetic process"/>
    <property type="evidence" value="ECO:0000304"/>
    <property type="project" value="FlyBase"/>
</dbReference>
<dbReference type="CDD" id="cd01420">
    <property type="entry name" value="MoaC_PE"/>
    <property type="match status" value="1"/>
</dbReference>
<dbReference type="CDD" id="cd01335">
    <property type="entry name" value="Radical_SAM"/>
    <property type="match status" value="1"/>
</dbReference>
<dbReference type="CDD" id="cd21117">
    <property type="entry name" value="Twitch_MoaA"/>
    <property type="match status" value="1"/>
</dbReference>
<dbReference type="FunFam" id="3.30.70.640:FF:000002">
    <property type="entry name" value="Molybdenum cofactor biosynthesis protein 1"/>
    <property type="match status" value="1"/>
</dbReference>
<dbReference type="FunFam" id="3.20.20.70:FF:000117">
    <property type="entry name" value="molybdenum cofactor biosynthesis protein 1"/>
    <property type="match status" value="1"/>
</dbReference>
<dbReference type="Gene3D" id="3.20.20.70">
    <property type="entry name" value="Aldolase class I"/>
    <property type="match status" value="1"/>
</dbReference>
<dbReference type="Gene3D" id="3.30.70.640">
    <property type="entry name" value="Molybdopterin cofactor biosynthesis C (MoaC) domain"/>
    <property type="match status" value="1"/>
</dbReference>
<dbReference type="HAMAP" id="MF_01225_B">
    <property type="entry name" value="MoaA_B"/>
    <property type="match status" value="1"/>
</dbReference>
<dbReference type="HAMAP" id="MF_01224_B">
    <property type="entry name" value="MoaC_B"/>
    <property type="match status" value="1"/>
</dbReference>
<dbReference type="InterPro" id="IPR013785">
    <property type="entry name" value="Aldolase_TIM"/>
</dbReference>
<dbReference type="InterPro" id="IPR006638">
    <property type="entry name" value="Elp3/MiaA/NifB-like_rSAM"/>
</dbReference>
<dbReference type="InterPro" id="IPR013483">
    <property type="entry name" value="MoaA"/>
</dbReference>
<dbReference type="InterPro" id="IPR000385">
    <property type="entry name" value="MoaA_NifB_PqqE_Fe-S-bd_CS"/>
</dbReference>
<dbReference type="InterPro" id="IPR010505">
    <property type="entry name" value="MoaA_twitch"/>
</dbReference>
<dbReference type="InterPro" id="IPR023045">
    <property type="entry name" value="MoaC"/>
</dbReference>
<dbReference type="InterPro" id="IPR047594">
    <property type="entry name" value="MoaC_bact/euk"/>
</dbReference>
<dbReference type="InterPro" id="IPR036522">
    <property type="entry name" value="MoaC_sf"/>
</dbReference>
<dbReference type="InterPro" id="IPR050105">
    <property type="entry name" value="MoCo_biosynth_MoaA/MoaC"/>
</dbReference>
<dbReference type="InterPro" id="IPR002820">
    <property type="entry name" value="Mopterin_CF_biosynth-C_dom"/>
</dbReference>
<dbReference type="InterPro" id="IPR007197">
    <property type="entry name" value="rSAM"/>
</dbReference>
<dbReference type="NCBIfam" id="TIGR02666">
    <property type="entry name" value="moaA"/>
    <property type="match status" value="1"/>
</dbReference>
<dbReference type="NCBIfam" id="TIGR00581">
    <property type="entry name" value="moaC"/>
    <property type="match status" value="1"/>
</dbReference>
<dbReference type="NCBIfam" id="NF006870">
    <property type="entry name" value="PRK09364.1"/>
    <property type="match status" value="1"/>
</dbReference>
<dbReference type="PANTHER" id="PTHR22960:SF0">
    <property type="entry name" value="MOLYBDENUM COFACTOR BIOSYNTHESIS PROTEIN 1"/>
    <property type="match status" value="1"/>
</dbReference>
<dbReference type="PANTHER" id="PTHR22960">
    <property type="entry name" value="MOLYBDOPTERIN COFACTOR SYNTHESIS PROTEIN A"/>
    <property type="match status" value="1"/>
</dbReference>
<dbReference type="Pfam" id="PF13353">
    <property type="entry name" value="Fer4_12"/>
    <property type="match status" value="1"/>
</dbReference>
<dbReference type="Pfam" id="PF01967">
    <property type="entry name" value="MoaC"/>
    <property type="match status" value="1"/>
</dbReference>
<dbReference type="Pfam" id="PF06463">
    <property type="entry name" value="Mob_synth_C"/>
    <property type="match status" value="1"/>
</dbReference>
<dbReference type="Pfam" id="PF04055">
    <property type="entry name" value="Radical_SAM"/>
    <property type="match status" value="1"/>
</dbReference>
<dbReference type="SFLD" id="SFLDG01383">
    <property type="entry name" value="cyclic_pyranopterin_phosphate"/>
    <property type="match status" value="1"/>
</dbReference>
<dbReference type="SFLD" id="SFLDG01386">
    <property type="entry name" value="main_SPASM_domain-containing"/>
    <property type="match status" value="1"/>
</dbReference>
<dbReference type="SMART" id="SM00729">
    <property type="entry name" value="Elp3"/>
    <property type="match status" value="1"/>
</dbReference>
<dbReference type="SUPFAM" id="SSF55040">
    <property type="entry name" value="Molybdenum cofactor biosynthesis protein C, MoaC"/>
    <property type="match status" value="1"/>
</dbReference>
<dbReference type="SUPFAM" id="SSF102114">
    <property type="entry name" value="Radical SAM enzymes"/>
    <property type="match status" value="1"/>
</dbReference>
<dbReference type="PROSITE" id="PS01305">
    <property type="entry name" value="MOAA_NIFB_PQQE"/>
    <property type="match status" value="1"/>
</dbReference>
<dbReference type="PROSITE" id="PS51918">
    <property type="entry name" value="RADICAL_SAM"/>
    <property type="match status" value="1"/>
</dbReference>
<feature type="chain" id="PRO_0000369401" description="Molybdenum cofactor biosynthesis protein 1">
    <location>
        <begin position="1"/>
        <end position="565"/>
    </location>
</feature>
<feature type="domain" description="Radical SAM core" evidence="5">
    <location>
        <begin position="64"/>
        <end position="276"/>
    </location>
</feature>
<feature type="region of interest" description="Molybdenum cofactor biosynthesis protein A">
    <location>
        <begin position="3"/>
        <end position="367"/>
    </location>
</feature>
<feature type="active site" description="For molybdenum cofactor biosynthesis protein C activity" evidence="4">
    <location>
        <position position="525"/>
    </location>
</feature>
<feature type="binding site" evidence="1">
    <location>
        <position position="73"/>
    </location>
    <ligand>
        <name>GTP</name>
        <dbReference type="ChEBI" id="CHEBI:37565"/>
    </ligand>
</feature>
<feature type="binding site" evidence="1">
    <location>
        <position position="80"/>
    </location>
    <ligand>
        <name>[4Fe-4S] cluster</name>
        <dbReference type="ChEBI" id="CHEBI:49883"/>
        <label>1</label>
        <note>4Fe-4S-S-AdoMet</note>
    </ligand>
</feature>
<feature type="binding site" evidence="1">
    <location>
        <position position="84"/>
    </location>
    <ligand>
        <name>[4Fe-4S] cluster</name>
        <dbReference type="ChEBI" id="CHEBI:49883"/>
        <label>1</label>
        <note>4Fe-4S-S-AdoMet</note>
    </ligand>
</feature>
<feature type="binding site" evidence="1">
    <location>
        <position position="86"/>
    </location>
    <ligand>
        <name>S-adenosyl-L-methionine</name>
        <dbReference type="ChEBI" id="CHEBI:59789"/>
    </ligand>
</feature>
<feature type="binding site" evidence="1">
    <location>
        <position position="87"/>
    </location>
    <ligand>
        <name>[4Fe-4S] cluster</name>
        <dbReference type="ChEBI" id="CHEBI:49883"/>
        <label>1</label>
        <note>4Fe-4S-S-AdoMet</note>
    </ligand>
</feature>
<feature type="binding site" evidence="1">
    <location>
        <position position="123"/>
    </location>
    <ligand>
        <name>GTP</name>
        <dbReference type="ChEBI" id="CHEBI:37565"/>
    </ligand>
</feature>
<feature type="binding site" evidence="1">
    <location>
        <position position="127"/>
    </location>
    <ligand>
        <name>S-adenosyl-L-methionine</name>
        <dbReference type="ChEBI" id="CHEBI:59789"/>
    </ligand>
</feature>
<feature type="binding site" evidence="1">
    <location>
        <position position="154"/>
    </location>
    <ligand>
        <name>GTP</name>
        <dbReference type="ChEBI" id="CHEBI:37565"/>
    </ligand>
</feature>
<feature type="binding site" evidence="1">
    <location>
        <position position="178"/>
    </location>
    <ligand>
        <name>S-adenosyl-L-methionine</name>
        <dbReference type="ChEBI" id="CHEBI:59789"/>
    </ligand>
</feature>
<feature type="binding site" evidence="1">
    <location>
        <position position="214"/>
    </location>
    <ligand>
        <name>GTP</name>
        <dbReference type="ChEBI" id="CHEBI:37565"/>
    </ligand>
</feature>
<feature type="binding site" evidence="1">
    <location>
        <position position="248"/>
    </location>
    <ligand>
        <name>S-adenosyl-L-methionine</name>
        <dbReference type="ChEBI" id="CHEBI:59789"/>
    </ligand>
</feature>
<feature type="binding site" evidence="1">
    <location>
        <position position="311"/>
    </location>
    <ligand>
        <name>[4Fe-4S] cluster</name>
        <dbReference type="ChEBI" id="CHEBI:49883"/>
        <label>2</label>
        <note>4Fe-4S-substrate</note>
    </ligand>
</feature>
<feature type="binding site" evidence="1">
    <location>
        <position position="314"/>
    </location>
    <ligand>
        <name>[4Fe-4S] cluster</name>
        <dbReference type="ChEBI" id="CHEBI:49883"/>
        <label>2</label>
        <note>4Fe-4S-substrate</note>
    </ligand>
</feature>
<feature type="binding site" evidence="1">
    <location>
        <begin position="316"/>
        <end position="318"/>
    </location>
    <ligand>
        <name>GTP</name>
        <dbReference type="ChEBI" id="CHEBI:37565"/>
    </ligand>
</feature>
<feature type="binding site" evidence="1">
    <location>
        <position position="328"/>
    </location>
    <ligand>
        <name>[4Fe-4S] cluster</name>
        <dbReference type="ChEBI" id="CHEBI:49883"/>
        <label>2</label>
        <note>4Fe-4S-substrate</note>
    </ligand>
</feature>
<feature type="splice variant" id="VSP_036853" description="In isoform Mocs1a." evidence="6 7">
    <original>DAAPRLHHHLHPYSYHHA</original>
    <variation>GMLNLSQMENRPMILIGG</variation>
    <location>
        <begin position="368"/>
        <end position="385"/>
    </location>
</feature>
<feature type="splice variant" id="VSP_036854" description="In isoform Mocs1a." evidence="6 7">
    <location>
        <begin position="386"/>
        <end position="565"/>
    </location>
</feature>
<feature type="sequence conflict" description="In Ref. 1; AAF67855." evidence="8" ref="1">
    <original>E</original>
    <variation>D</variation>
    <location>
        <position position="116"/>
    </location>
</feature>
<proteinExistence type="evidence at transcript level"/>
<organism>
    <name type="scientific">Drosophila melanogaster</name>
    <name type="common">Fruit fly</name>
    <dbReference type="NCBI Taxonomy" id="7227"/>
    <lineage>
        <taxon>Eukaryota</taxon>
        <taxon>Metazoa</taxon>
        <taxon>Ecdysozoa</taxon>
        <taxon>Arthropoda</taxon>
        <taxon>Hexapoda</taxon>
        <taxon>Insecta</taxon>
        <taxon>Pterygota</taxon>
        <taxon>Neoptera</taxon>
        <taxon>Endopterygota</taxon>
        <taxon>Diptera</taxon>
        <taxon>Brachycera</taxon>
        <taxon>Muscomorpha</taxon>
        <taxon>Ephydroidea</taxon>
        <taxon>Drosophilidae</taxon>
        <taxon>Drosophila</taxon>
        <taxon>Sophophora</taxon>
    </lineage>
</organism>
<name>MOCS1_DROME</name>